<proteinExistence type="predicted"/>
<name>Y3506_METJA</name>
<reference key="1">
    <citation type="journal article" date="1996" name="Science">
        <title>Complete genome sequence of the methanogenic archaeon, Methanococcus jannaschii.</title>
        <authorList>
            <person name="Bult C.J."/>
            <person name="White O."/>
            <person name="Olsen G.J."/>
            <person name="Zhou L."/>
            <person name="Fleischmann R.D."/>
            <person name="Sutton G.G."/>
            <person name="Blake J.A."/>
            <person name="FitzGerald L.M."/>
            <person name="Clayton R.A."/>
            <person name="Gocayne J.D."/>
            <person name="Kerlavage A.R."/>
            <person name="Dougherty B.A."/>
            <person name="Tomb J.-F."/>
            <person name="Adams M.D."/>
            <person name="Reich C.I."/>
            <person name="Overbeek R."/>
            <person name="Kirkness E.F."/>
            <person name="Weinstock K.G."/>
            <person name="Merrick J.M."/>
            <person name="Glodek A."/>
            <person name="Scott J.L."/>
            <person name="Geoghagen N.S.M."/>
            <person name="Weidman J.F."/>
            <person name="Fuhrmann J.L."/>
            <person name="Nguyen D."/>
            <person name="Utterback T.R."/>
            <person name="Kelley J.M."/>
            <person name="Peterson J.D."/>
            <person name="Sadow P.W."/>
            <person name="Hanna M.C."/>
            <person name="Cotton M.D."/>
            <person name="Roberts K.M."/>
            <person name="Hurst M.A."/>
            <person name="Kaine B.P."/>
            <person name="Borodovsky M."/>
            <person name="Klenk H.-P."/>
            <person name="Fraser C.M."/>
            <person name="Smith H.O."/>
            <person name="Woese C.R."/>
            <person name="Venter J.C."/>
        </authorList>
    </citation>
    <scope>NUCLEOTIDE SEQUENCE [LARGE SCALE GENOMIC DNA]</scope>
    <source>
        <strain>ATCC 43067 / DSM 2661 / JAL-1 / JCM 10045 / NBRC 100440</strain>
    </source>
</reference>
<protein>
    <recommendedName>
        <fullName>Uncharacterized protein MJECL06</fullName>
    </recommendedName>
</protein>
<feature type="chain" id="PRO_0000107498" description="Uncharacterized protein MJECL06">
    <location>
        <begin position="1"/>
        <end position="116"/>
    </location>
</feature>
<keyword id="KW-0614">Plasmid</keyword>
<keyword id="KW-1185">Reference proteome</keyword>
<sequence length="116" mass="13827">MSVELRTLFRLIAVLEHSEEFKKVLFACERHFESGYCKCGPMEMCNIALAEAMKEDPTLVLRKWRRVFTYLEEVGIIKTRKLEAPANRPRRYIKLSENWMEALRTAIDKEYEKLIR</sequence>
<geneLocation type="plasmid">
    <name>large ECE</name>
</geneLocation>
<organism>
    <name type="scientific">Methanocaldococcus jannaschii (strain ATCC 43067 / DSM 2661 / JAL-1 / JCM 10045 / NBRC 100440)</name>
    <name type="common">Methanococcus jannaschii</name>
    <dbReference type="NCBI Taxonomy" id="243232"/>
    <lineage>
        <taxon>Archaea</taxon>
        <taxon>Methanobacteriati</taxon>
        <taxon>Methanobacteriota</taxon>
        <taxon>Methanomada group</taxon>
        <taxon>Methanococci</taxon>
        <taxon>Methanococcales</taxon>
        <taxon>Methanocaldococcaceae</taxon>
        <taxon>Methanocaldococcus</taxon>
    </lineage>
</organism>
<gene>
    <name type="ordered locus">MJECL06</name>
</gene>
<accession>Q60261</accession>
<dbReference type="EMBL" id="L77118">
    <property type="protein sequence ID" value="AAC37079.1"/>
    <property type="molecule type" value="Genomic_DNA"/>
</dbReference>
<dbReference type="PIR" id="F64510">
    <property type="entry name" value="F64510"/>
</dbReference>
<dbReference type="RefSeq" id="WP_010890053.1">
    <property type="nucleotide sequence ID" value="NC_001732.1"/>
</dbReference>
<dbReference type="SMR" id="Q60261"/>
<dbReference type="PaxDb" id="243232-MJ_ECL06"/>
<dbReference type="EnsemblBacteria" id="AAC37079">
    <property type="protein sequence ID" value="AAC37079"/>
    <property type="gene ID" value="MJ_ECL06"/>
</dbReference>
<dbReference type="GeneID" id="1450792"/>
<dbReference type="KEGG" id="mja:MJ_ECL06"/>
<dbReference type="eggNOG" id="arCOG10970">
    <property type="taxonomic scope" value="Archaea"/>
</dbReference>
<dbReference type="HOGENOM" id="CLU_2091314_0_0_2"/>
<dbReference type="InParanoid" id="Q60261"/>
<dbReference type="OrthoDB" id="384762at2157"/>
<dbReference type="Proteomes" id="UP000000805">
    <property type="component" value="Plasmid pDSM2661_1"/>
</dbReference>